<name>ARB2A_CHICK</name>
<evidence type="ECO:0000250" key="1">
    <source>
        <dbReference type="UniProtKB" id="Q3TNH5"/>
    </source>
</evidence>
<evidence type="ECO:0000250" key="2">
    <source>
        <dbReference type="UniProtKB" id="Q8WUF8"/>
    </source>
</evidence>
<evidence type="ECO:0000255" key="3"/>
<evidence type="ECO:0000256" key="4">
    <source>
        <dbReference type="SAM" id="MobiDB-lite"/>
    </source>
</evidence>
<evidence type="ECO:0000305" key="5"/>
<accession>Q5ZK44</accession>
<protein>
    <recommendedName>
        <fullName evidence="2">Cotranscriptional regulator ARB2A homolog</fullName>
    </recommendedName>
    <alternativeName>
        <fullName evidence="1">Cotranscriptional regulator FAM172A homolog</fullName>
    </alternativeName>
    <alternativeName>
        <fullName>Protein FAM172A</fullName>
    </alternativeName>
</protein>
<sequence length="416" mass="48354">MHFYFNVLNLLTVWVMMAQLQQGVPDEKEKTTALKDLLSRIDLDELMKKDEPPLEFPDTLEGFEYSFNEKGQLRHAKTGEPFVFNYREDLHRWNQKRYEALGEIITKHVYGLLEKECHLKKVTLPVDATENEPKSFIFMSEDALTNPDKLLVLIHGNGVVRAGQWARRLIINEDLDSGTQIPYIKKATEEGYGVIVLNPNENYIEVEKTKAQVQLSSDSSDEPAEKRERKDKIQKETKKRRDFYEKYRNPQKEKETMQMYIRDNGSPEEHAIYVWDHFISQSAAENVFFVAHSYGGLAFVELMIQRETEVKNKVTAVALTDSVHNVWHQEAGKTIREWMRENCCNWVSSSEPLDTSVESMLPDCPRVSAGTERHELTSWKSFPSIFKFFSEAMEAKNSSVKPAPTRRSNRIKYEEL</sequence>
<reference key="1">
    <citation type="journal article" date="2005" name="Genome Biol.">
        <title>Full-length cDNAs from chicken bursal lymphocytes to facilitate gene function analysis.</title>
        <authorList>
            <person name="Caldwell R.B."/>
            <person name="Kierzek A.M."/>
            <person name="Arakawa H."/>
            <person name="Bezzubov Y."/>
            <person name="Zaim J."/>
            <person name="Fiedler P."/>
            <person name="Kutter S."/>
            <person name="Blagodatski A."/>
            <person name="Kostovska D."/>
            <person name="Koter M."/>
            <person name="Plachy J."/>
            <person name="Carninci P."/>
            <person name="Hayashizaki Y."/>
            <person name="Buerstedde J.-M."/>
        </authorList>
    </citation>
    <scope>NUCLEOTIDE SEQUENCE [LARGE SCALE MRNA]</scope>
    <source>
        <strain>CB</strain>
        <tissue>Bursa of Fabricius</tissue>
    </source>
</reference>
<feature type="signal peptide" evidence="3">
    <location>
        <begin position="1"/>
        <end position="23"/>
    </location>
</feature>
<feature type="chain" id="PRO_0000320933" description="Cotranscriptional regulator ARB2A homolog">
    <location>
        <begin position="24"/>
        <end position="416"/>
    </location>
</feature>
<feature type="region of interest" description="Disordered" evidence="4">
    <location>
        <begin position="211"/>
        <end position="248"/>
    </location>
</feature>
<feature type="compositionally biased region" description="Basic and acidic residues" evidence="4">
    <location>
        <begin position="223"/>
        <end position="236"/>
    </location>
</feature>
<feature type="active site" description="Nucleophile" evidence="1">
    <location>
        <position position="293"/>
    </location>
</feature>
<feature type="glycosylation site" description="N-linked (GlcNAc...) asparagine" evidence="3">
    <location>
        <position position="397"/>
    </location>
</feature>
<dbReference type="EMBL" id="AJ720240">
    <property type="protein sequence ID" value="CAG31899.1"/>
    <property type="molecule type" value="mRNA"/>
</dbReference>
<dbReference type="RefSeq" id="NP_001006574.1">
    <property type="nucleotide sequence ID" value="NM_001006574.1"/>
</dbReference>
<dbReference type="SMR" id="Q5ZK44"/>
<dbReference type="FunCoup" id="Q5ZK44">
    <property type="interactions" value="2096"/>
</dbReference>
<dbReference type="STRING" id="9031.ENSGALP00000064299"/>
<dbReference type="ESTHER" id="chick-f172a">
    <property type="family name" value="Arb2_FAM172A"/>
</dbReference>
<dbReference type="GlyCosmos" id="Q5ZK44">
    <property type="glycosylation" value="1 site, No reported glycans"/>
</dbReference>
<dbReference type="GlyGen" id="Q5ZK44">
    <property type="glycosylation" value="1 site"/>
</dbReference>
<dbReference type="PaxDb" id="9031-ENSGALP00000036880"/>
<dbReference type="Ensembl" id="ENSGALT00010032486.1">
    <property type="protein sequence ID" value="ENSGALP00010019230.1"/>
    <property type="gene ID" value="ENSGALG00010013497.1"/>
</dbReference>
<dbReference type="GeneID" id="427109"/>
<dbReference type="KEGG" id="gga:427109"/>
<dbReference type="CTD" id="617002"/>
<dbReference type="VEuPathDB" id="HostDB:geneid_427109"/>
<dbReference type="eggNOG" id="KOG3967">
    <property type="taxonomic scope" value="Eukaryota"/>
</dbReference>
<dbReference type="GeneTree" id="ENSGT00530000063907"/>
<dbReference type="HOGENOM" id="CLU_048484_2_1_1"/>
<dbReference type="InParanoid" id="Q5ZK44"/>
<dbReference type="OMA" id="LAFVELX"/>
<dbReference type="OrthoDB" id="421951at2759"/>
<dbReference type="PhylomeDB" id="Q5ZK44"/>
<dbReference type="PRO" id="PR:Q5ZK44"/>
<dbReference type="Proteomes" id="UP000000539">
    <property type="component" value="Chromosome Z"/>
</dbReference>
<dbReference type="Bgee" id="ENSGALG00000014661">
    <property type="expression patterns" value="Expressed in colon and 13 other cell types or tissues"/>
</dbReference>
<dbReference type="GO" id="GO:0005737">
    <property type="term" value="C:cytoplasm"/>
    <property type="evidence" value="ECO:0000250"/>
    <property type="project" value="UniProtKB"/>
</dbReference>
<dbReference type="GO" id="GO:0005783">
    <property type="term" value="C:endoplasmic reticulum"/>
    <property type="evidence" value="ECO:0007669"/>
    <property type="project" value="Ensembl"/>
</dbReference>
<dbReference type="GO" id="GO:0005634">
    <property type="term" value="C:nucleus"/>
    <property type="evidence" value="ECO:0000250"/>
    <property type="project" value="UniProtKB"/>
</dbReference>
<dbReference type="GO" id="GO:0006397">
    <property type="term" value="P:mRNA processing"/>
    <property type="evidence" value="ECO:0007669"/>
    <property type="project" value="UniProtKB-KW"/>
</dbReference>
<dbReference type="GO" id="GO:0014032">
    <property type="term" value="P:neural crest cell development"/>
    <property type="evidence" value="ECO:0007669"/>
    <property type="project" value="Ensembl"/>
</dbReference>
<dbReference type="GO" id="GO:0000381">
    <property type="term" value="P:regulation of alternative mRNA splicing, via spliceosome"/>
    <property type="evidence" value="ECO:0007669"/>
    <property type="project" value="Ensembl"/>
</dbReference>
<dbReference type="GO" id="GO:0031048">
    <property type="term" value="P:regulatory ncRNA-mediated heterochromatin formation"/>
    <property type="evidence" value="ECO:0000318"/>
    <property type="project" value="GO_Central"/>
</dbReference>
<dbReference type="GO" id="GO:0008380">
    <property type="term" value="P:RNA splicing"/>
    <property type="evidence" value="ECO:0007669"/>
    <property type="project" value="UniProtKB-KW"/>
</dbReference>
<dbReference type="InterPro" id="IPR029058">
    <property type="entry name" value="AB_hydrolase_fold"/>
</dbReference>
<dbReference type="InterPro" id="IPR048263">
    <property type="entry name" value="Arb2"/>
</dbReference>
<dbReference type="InterPro" id="IPR053858">
    <property type="entry name" value="Arb2_dom"/>
</dbReference>
<dbReference type="PANTHER" id="PTHR21357:SF3">
    <property type="entry name" value="COTRANSCRIPTIONAL REGULATOR FAM172A"/>
    <property type="match status" value="1"/>
</dbReference>
<dbReference type="PANTHER" id="PTHR21357">
    <property type="entry name" value="FAM172 FAMILY PROTEIN HOMOLOG CG10038"/>
    <property type="match status" value="1"/>
</dbReference>
<dbReference type="Pfam" id="PF22749">
    <property type="entry name" value="Arb2"/>
    <property type="match status" value="1"/>
</dbReference>
<dbReference type="SUPFAM" id="SSF53474">
    <property type="entry name" value="alpha/beta-Hydrolases"/>
    <property type="match status" value="1"/>
</dbReference>
<gene>
    <name type="primary">ARB2A</name>
    <name type="synonym">FAM172A</name>
    <name type="ORF">RCJMB04_13e16</name>
</gene>
<keyword id="KW-0963">Cytoplasm</keyword>
<keyword id="KW-0325">Glycoprotein</keyword>
<keyword id="KW-0507">mRNA processing</keyword>
<keyword id="KW-0508">mRNA splicing</keyword>
<keyword id="KW-0539">Nucleus</keyword>
<keyword id="KW-1185">Reference proteome</keyword>
<keyword id="KW-0732">Signal</keyword>
<comment type="function">
    <text evidence="1">May play role in the regulation of alternative splicing. May have hydrolase activity.</text>
</comment>
<comment type="subcellular location">
    <subcellularLocation>
        <location evidence="1">Nucleus</location>
    </subcellularLocation>
    <subcellularLocation>
        <location evidence="1">Cytoplasm</location>
    </subcellularLocation>
</comment>
<comment type="similarity">
    <text evidence="5">Belongs to the ARB2A family.</text>
</comment>
<proteinExistence type="evidence at transcript level"/>
<organism>
    <name type="scientific">Gallus gallus</name>
    <name type="common">Chicken</name>
    <dbReference type="NCBI Taxonomy" id="9031"/>
    <lineage>
        <taxon>Eukaryota</taxon>
        <taxon>Metazoa</taxon>
        <taxon>Chordata</taxon>
        <taxon>Craniata</taxon>
        <taxon>Vertebrata</taxon>
        <taxon>Euteleostomi</taxon>
        <taxon>Archelosauria</taxon>
        <taxon>Archosauria</taxon>
        <taxon>Dinosauria</taxon>
        <taxon>Saurischia</taxon>
        <taxon>Theropoda</taxon>
        <taxon>Coelurosauria</taxon>
        <taxon>Aves</taxon>
        <taxon>Neognathae</taxon>
        <taxon>Galloanserae</taxon>
        <taxon>Galliformes</taxon>
        <taxon>Phasianidae</taxon>
        <taxon>Phasianinae</taxon>
        <taxon>Gallus</taxon>
    </lineage>
</organism>